<dbReference type="EMBL" id="L02497">
    <property type="protein sequence ID" value="AAA56850.1"/>
    <property type="molecule type" value="Genomic_DNA"/>
</dbReference>
<dbReference type="PIR" id="A47756">
    <property type="entry name" value="A47756"/>
</dbReference>
<dbReference type="InterPro" id="IPR019612">
    <property type="entry name" value="Minor_capsid_put"/>
</dbReference>
<dbReference type="Pfam" id="PF10665">
    <property type="entry name" value="Minor_capsid_1"/>
    <property type="match status" value="1"/>
</dbReference>
<evidence type="ECO:0000305" key="1"/>
<proteinExistence type="inferred from homology"/>
<feature type="chain" id="PRO_0000066226" description="Uncharacterized protein ORF5">
    <location>
        <begin position="1"/>
        <end position="113"/>
    </location>
</feature>
<comment type="similarity">
    <text evidence="1">Belongs to the Lactobacillus delbrueckii bacteriophages ORF5 protein family.</text>
</comment>
<name>YG35_BPMV4</name>
<reference key="1">
    <citation type="journal article" date="1993" name="J. Virol.">
        <title>Molecular comparison of the structural proteins encoding gene clusters of two related Lactobacillus delbrueckii bacteriophages.</title>
        <authorList>
            <person name="Vasala A."/>
            <person name="Dupont L."/>
            <person name="Baumann M."/>
            <person name="Ritzenthaler P."/>
            <person name="Alatossava T."/>
        </authorList>
    </citation>
    <scope>NUCLEOTIDE SEQUENCE [GENOMIC DNA]</scope>
</reference>
<organismHost>
    <name type="scientific">Lactobacillus delbrueckii</name>
    <dbReference type="NCBI Taxonomy" id="1584"/>
</organismHost>
<protein>
    <recommendedName>
        <fullName>Uncharacterized protein ORF5</fullName>
    </recommendedName>
</protein>
<sequence>MKLPIPYQMAVSTVHLKLTDQSAKKDRYGRTIPSWEGDIAKCVVNMQTTYSGTNNDRQIVANGLVMMYAGYSDPIPALTKENLESKLTYKGQEYTVKSINRFDQPGHRRLILL</sequence>
<organism>
    <name type="scientific">Lactococcus phage mv4</name>
    <name type="common">Lactococcus delbrueckii bacteriophage mv4</name>
    <dbReference type="NCBI Taxonomy" id="12392"/>
    <lineage>
        <taxon>Viruses</taxon>
    </lineage>
</organism>
<accession>Q04775</accession>